<gene>
    <name type="primary">apcA</name>
</gene>
<keyword id="KW-0002">3D-structure</keyword>
<keyword id="KW-0042">Antenna complex</keyword>
<keyword id="KW-0089">Bile pigment</keyword>
<keyword id="KW-0157">Chromophore</keyword>
<keyword id="KW-0903">Direct protein sequencing</keyword>
<keyword id="KW-0249">Electron transport</keyword>
<keyword id="KW-0472">Membrane</keyword>
<keyword id="KW-0488">Methylation</keyword>
<keyword id="KW-0602">Photosynthesis</keyword>
<keyword id="KW-0605">Phycobilisome</keyword>
<keyword id="KW-0793">Thylakoid</keyword>
<keyword id="KW-0813">Transport</keyword>
<organism>
    <name type="scientific">Mastigocladus laminosus</name>
    <name type="common">Fischerella sp.</name>
    <dbReference type="NCBI Taxonomy" id="83541"/>
    <lineage>
        <taxon>Bacteria</taxon>
        <taxon>Bacillati</taxon>
        <taxon>Cyanobacteriota</taxon>
        <taxon>Cyanophyceae</taxon>
        <taxon>Nostocales</taxon>
        <taxon>Hapalosiphonaceae</taxon>
        <taxon>Mastigocladus</taxon>
    </lineage>
</organism>
<sequence>SIVTKSIVNADAEARYLSPGELDRIKSFVSSGEKRLRIAQILTDNRERIVKQAGDQLFQKRPDVVSPGGNAYGQEMTATCLRDLDYYLRLITYGIVAGDVTPIEEIGIVGVREMYKSLGTPIDAVAAGVSAMKNVASSILSAEDAAEAGAYFDYVAGALA</sequence>
<protein>
    <recommendedName>
        <fullName>Allophycocyanin alpha chain</fullName>
    </recommendedName>
</protein>
<comment type="function">
    <text>Light-harvesting photosynthetic bile pigment-protein from the phycobiliprotein complex. Allophycocyanin has a maximum absorption at approximately 650 nanometers.</text>
</comment>
<comment type="subunit">
    <text>Component of the phycobilisome. Heterodimer of an alpha and a beta chain.</text>
</comment>
<comment type="subcellular location">
    <subcellularLocation>
        <location>Cellular thylakoid membrane</location>
        <topology>Peripheral membrane protein</topology>
        <orientation>Cytoplasmic side</orientation>
    </subcellularLocation>
    <text>Forms the core of the phycobilisome.</text>
</comment>
<comment type="PTM">
    <text>Contains one covalently linked phycocyanobilin chromophore.</text>
</comment>
<comment type="similarity">
    <text evidence="2">Belongs to the phycobiliprotein family.</text>
</comment>
<accession>P00315</accession>
<dbReference type="PDB" id="1B33">
    <property type="method" value="X-ray"/>
    <property type="resolution" value="2.30 A"/>
    <property type="chains" value="A/C/E/H/J/L=1-160"/>
</dbReference>
<dbReference type="PDBsum" id="1B33"/>
<dbReference type="SMR" id="P00315"/>
<dbReference type="iPTMnet" id="P00315"/>
<dbReference type="EvolutionaryTrace" id="P00315"/>
<dbReference type="GO" id="GO:0030089">
    <property type="term" value="C:phycobilisome"/>
    <property type="evidence" value="ECO:0007669"/>
    <property type="project" value="UniProtKB-KW"/>
</dbReference>
<dbReference type="GO" id="GO:0031676">
    <property type="term" value="C:plasma membrane-derived thylakoid membrane"/>
    <property type="evidence" value="ECO:0007669"/>
    <property type="project" value="UniProtKB-SubCell"/>
</dbReference>
<dbReference type="GO" id="GO:0015979">
    <property type="term" value="P:photosynthesis"/>
    <property type="evidence" value="ECO:0007669"/>
    <property type="project" value="UniProtKB-KW"/>
</dbReference>
<dbReference type="CDD" id="cd12125">
    <property type="entry name" value="APC_alpha"/>
    <property type="match status" value="1"/>
</dbReference>
<dbReference type="Gene3D" id="1.10.490.20">
    <property type="entry name" value="Phycocyanins"/>
    <property type="match status" value="1"/>
</dbReference>
<dbReference type="InterPro" id="IPR009050">
    <property type="entry name" value="Globin-like_sf"/>
</dbReference>
<dbReference type="InterPro" id="IPR012128">
    <property type="entry name" value="Phycobilisome_asu/bsu"/>
</dbReference>
<dbReference type="InterPro" id="IPR038719">
    <property type="entry name" value="Phycobilisome_asu/bsu_sf"/>
</dbReference>
<dbReference type="PANTHER" id="PTHR34011:SF2">
    <property type="entry name" value="ALLOPHYCOCYANIN ALPHA CHAIN"/>
    <property type="match status" value="1"/>
</dbReference>
<dbReference type="PANTHER" id="PTHR34011">
    <property type="entry name" value="PHYCOBILISOME 32.1 KDA LINKER POLYPEPTIDE, PHYCOCYANIN-ASSOCIATED, ROD 2-RELATED"/>
    <property type="match status" value="1"/>
</dbReference>
<dbReference type="Pfam" id="PF00502">
    <property type="entry name" value="Phycobilisome"/>
    <property type="match status" value="1"/>
</dbReference>
<dbReference type="PIRSF" id="PIRSF000081">
    <property type="entry name" value="Phycocyanin"/>
    <property type="match status" value="1"/>
</dbReference>
<dbReference type="SUPFAM" id="SSF46458">
    <property type="entry name" value="Globin-like"/>
    <property type="match status" value="1"/>
</dbReference>
<feature type="chain" id="PRO_0000199073" description="Allophycocyanin alpha chain">
    <location>
        <begin position="1"/>
        <end position="160"/>
    </location>
</feature>
<feature type="binding site" description="covalent">
    <location>
        <position position="80"/>
    </location>
    <ligand>
        <name>(2R,3E)-phycocyanobilin</name>
        <dbReference type="ChEBI" id="CHEBI:85275"/>
    </ligand>
</feature>
<feature type="modified residue" description="N4-methylasparagine" evidence="1">
    <location>
        <position position="70"/>
    </location>
</feature>
<feature type="helix" evidence="3">
    <location>
        <begin position="2"/>
        <end position="12"/>
    </location>
</feature>
<feature type="helix" evidence="3">
    <location>
        <begin position="19"/>
        <end position="30"/>
    </location>
</feature>
<feature type="helix" evidence="3">
    <location>
        <begin position="33"/>
        <end position="44"/>
    </location>
</feature>
<feature type="helix" evidence="3">
    <location>
        <begin position="46"/>
        <end position="60"/>
    </location>
</feature>
<feature type="helix" evidence="3">
    <location>
        <begin position="63"/>
        <end position="65"/>
    </location>
</feature>
<feature type="helix" evidence="3">
    <location>
        <begin position="74"/>
        <end position="97"/>
    </location>
</feature>
<feature type="helix" evidence="3">
    <location>
        <begin position="101"/>
        <end position="107"/>
    </location>
</feature>
<feature type="turn" evidence="3">
    <location>
        <begin position="108"/>
        <end position="110"/>
    </location>
</feature>
<feature type="helix" evidence="3">
    <location>
        <begin position="111"/>
        <end position="118"/>
    </location>
</feature>
<feature type="helix" evidence="3">
    <location>
        <begin position="122"/>
        <end position="136"/>
    </location>
</feature>
<feature type="turn" evidence="3">
    <location>
        <begin position="137"/>
        <end position="139"/>
    </location>
</feature>
<feature type="helix" evidence="3">
    <location>
        <begin position="142"/>
        <end position="158"/>
    </location>
</feature>
<proteinExistence type="evidence at protein level"/>
<evidence type="ECO:0000269" key="1">
    <source>
    </source>
</evidence>
<evidence type="ECO:0000305" key="2"/>
<evidence type="ECO:0007829" key="3">
    <source>
        <dbReference type="PDB" id="1B33"/>
    </source>
</evidence>
<reference key="1">
    <citation type="journal article" date="1981" name="Hoppe-Seyler's Z. Physiol. Chem.">
        <title>The complete amino acid sequence of both subunits of allophycocyanin, a light harvesting protein-pigment complex from the cyanobacterium Mastigocladus laminosus.</title>
        <authorList>
            <person name="Sidler W."/>
            <person name="Gysi J."/>
            <person name="Isker E."/>
            <person name="Zuber H."/>
        </authorList>
    </citation>
    <scope>PROTEIN SEQUENCE</scope>
</reference>
<reference key="2">
    <citation type="journal article" date="1999" name="Proc. Natl. Acad. Sci. U.S.A.">
        <title>Structural analysis at 2.2 A of orthorhombic crystals presents the asymmetry of the allophycocyanin-linker complex, AP.LC7.8, from phycobilisomes of Mastigocladus laminosus.</title>
        <authorList>
            <person name="Reuter W."/>
            <person name="Wiegand G."/>
            <person name="Huber R."/>
            <person name="Than M.E."/>
        </authorList>
    </citation>
    <scope>X-RAY CRYSTALLOGRAPHY (2.3 ANGSTROMS)</scope>
    <scope>METHYLATION AT ASN-70</scope>
    <source>
        <strain>PCC 7603</strain>
    </source>
</reference>
<name>PHAA_MASLA</name>